<protein>
    <recommendedName>
        <fullName evidence="1">S-adenosylmethionine decarboxylase proenzyme</fullName>
        <shortName evidence="1">AdoMetDC</shortName>
        <shortName evidence="1">SAMDC</shortName>
        <ecNumber evidence="1">4.1.1.50</ecNumber>
    </recommendedName>
    <component>
        <recommendedName>
            <fullName evidence="1">S-adenosylmethionine decarboxylase beta chain</fullName>
        </recommendedName>
    </component>
    <component>
        <recommendedName>
            <fullName evidence="1">S-adenosylmethionine decarboxylase alpha chain</fullName>
        </recommendedName>
    </component>
</protein>
<keyword id="KW-0068">Autocatalytic cleavage</keyword>
<keyword id="KW-0210">Decarboxylase</keyword>
<keyword id="KW-0456">Lyase</keyword>
<keyword id="KW-0620">Polyamine biosynthesis</keyword>
<keyword id="KW-0670">Pyruvate</keyword>
<keyword id="KW-0949">S-adenosyl-L-methionine</keyword>
<keyword id="KW-0704">Schiff base</keyword>
<keyword id="KW-0745">Spermidine biosynthesis</keyword>
<keyword id="KW-0865">Zymogen</keyword>
<proteinExistence type="inferred from homology"/>
<dbReference type="EC" id="4.1.1.50" evidence="1"/>
<dbReference type="EMBL" id="CP001120">
    <property type="protein sequence ID" value="ACF70015.1"/>
    <property type="molecule type" value="Genomic_DNA"/>
</dbReference>
<dbReference type="RefSeq" id="WP_000734293.1">
    <property type="nucleotide sequence ID" value="NC_011083.1"/>
</dbReference>
<dbReference type="KEGG" id="seh:SeHA_C0189"/>
<dbReference type="HOGENOM" id="CLU_092007_0_0_6"/>
<dbReference type="UniPathway" id="UPA00331">
    <property type="reaction ID" value="UER00451"/>
</dbReference>
<dbReference type="Proteomes" id="UP000001866">
    <property type="component" value="Chromosome"/>
</dbReference>
<dbReference type="GO" id="GO:0005829">
    <property type="term" value="C:cytosol"/>
    <property type="evidence" value="ECO:0007669"/>
    <property type="project" value="TreeGrafter"/>
</dbReference>
<dbReference type="GO" id="GO:0004014">
    <property type="term" value="F:adenosylmethionine decarboxylase activity"/>
    <property type="evidence" value="ECO:0007669"/>
    <property type="project" value="UniProtKB-UniRule"/>
</dbReference>
<dbReference type="GO" id="GO:0008295">
    <property type="term" value="P:spermidine biosynthetic process"/>
    <property type="evidence" value="ECO:0007669"/>
    <property type="project" value="UniProtKB-UniRule"/>
</dbReference>
<dbReference type="FunFam" id="3.60.90.10:FF:000001">
    <property type="entry name" value="S-adenosylmethionine decarboxylase proenzyme"/>
    <property type="match status" value="1"/>
</dbReference>
<dbReference type="Gene3D" id="3.60.90.10">
    <property type="entry name" value="S-adenosylmethionine decarboxylase"/>
    <property type="match status" value="1"/>
</dbReference>
<dbReference type="HAMAP" id="MF_00465">
    <property type="entry name" value="AdoMetDC_2"/>
    <property type="match status" value="1"/>
</dbReference>
<dbReference type="InterPro" id="IPR003826">
    <property type="entry name" value="AdoMetDC_fam_prok"/>
</dbReference>
<dbReference type="InterPro" id="IPR009165">
    <property type="entry name" value="S-AdoMet_deCO2ase_bac"/>
</dbReference>
<dbReference type="InterPro" id="IPR016067">
    <property type="entry name" value="S-AdoMet_deCO2ase_core"/>
</dbReference>
<dbReference type="NCBIfam" id="TIGR03331">
    <property type="entry name" value="SAM_DCase_Eco"/>
    <property type="match status" value="1"/>
</dbReference>
<dbReference type="PANTHER" id="PTHR33866">
    <property type="entry name" value="S-ADENOSYLMETHIONINE DECARBOXYLASE PROENZYME"/>
    <property type="match status" value="1"/>
</dbReference>
<dbReference type="PANTHER" id="PTHR33866:SF1">
    <property type="entry name" value="S-ADENOSYLMETHIONINE DECARBOXYLASE PROENZYME"/>
    <property type="match status" value="1"/>
</dbReference>
<dbReference type="Pfam" id="PF02675">
    <property type="entry name" value="AdoMet_dc"/>
    <property type="match status" value="1"/>
</dbReference>
<dbReference type="PIRSF" id="PIRSF001356">
    <property type="entry name" value="SAM_decarboxylas"/>
    <property type="match status" value="1"/>
</dbReference>
<dbReference type="SUPFAM" id="SSF56276">
    <property type="entry name" value="S-adenosylmethionine decarboxylase"/>
    <property type="match status" value="1"/>
</dbReference>
<reference key="1">
    <citation type="journal article" date="2011" name="J. Bacteriol.">
        <title>Comparative genomics of 28 Salmonella enterica isolates: evidence for CRISPR-mediated adaptive sublineage evolution.</title>
        <authorList>
            <person name="Fricke W.F."/>
            <person name="Mammel M.K."/>
            <person name="McDermott P.F."/>
            <person name="Tartera C."/>
            <person name="White D.G."/>
            <person name="Leclerc J.E."/>
            <person name="Ravel J."/>
            <person name="Cebula T.A."/>
        </authorList>
    </citation>
    <scope>NUCLEOTIDE SEQUENCE [LARGE SCALE GENOMIC DNA]</scope>
    <source>
        <strain>SL476</strain>
    </source>
</reference>
<accession>B4TJD1</accession>
<sequence length="264" mass="30401">MKKLKLHGFNNLTKSLSFCIYDICYAKTAEERDGYIAYIDELYNANRLTEILSETCSIIGANILNIARQDYEPQGASVTILVSEEPVDPKLIDQTEHPGPLPETVVAHLDKSHICVHTYPESHPEGGLCTFRADIEVSTCGVISPLKALNYLIHQLESDIVTIDYRVRGFTRDVNGMKHFIDHEINSIQNFMSEDMKSLYDMVDVNVYQENIFHTKMLLKEFDLKHYMFHTKPEDLTETERQEITAALWKEMREIYYGRNISAV</sequence>
<name>SPED_SALHS</name>
<evidence type="ECO:0000255" key="1">
    <source>
        <dbReference type="HAMAP-Rule" id="MF_00465"/>
    </source>
</evidence>
<comment type="function">
    <text evidence="1">Catalyzes the decarboxylation of S-adenosylmethionine to S-adenosylmethioninamine (dcAdoMet), the propylamine donor required for the synthesis of the polyamines spermine and spermidine from the diamine putrescine.</text>
</comment>
<comment type="catalytic activity">
    <reaction evidence="1">
        <text>S-adenosyl-L-methionine + H(+) = S-adenosyl 3-(methylsulfanyl)propylamine + CO2</text>
        <dbReference type="Rhea" id="RHEA:15981"/>
        <dbReference type="ChEBI" id="CHEBI:15378"/>
        <dbReference type="ChEBI" id="CHEBI:16526"/>
        <dbReference type="ChEBI" id="CHEBI:57443"/>
        <dbReference type="ChEBI" id="CHEBI:59789"/>
        <dbReference type="EC" id="4.1.1.50"/>
    </reaction>
</comment>
<comment type="cofactor">
    <cofactor evidence="1">
        <name>pyruvate</name>
        <dbReference type="ChEBI" id="CHEBI:15361"/>
    </cofactor>
    <text evidence="1">Binds 1 pyruvoyl group covalently per subunit.</text>
</comment>
<comment type="pathway">
    <text evidence="1">Amine and polyamine biosynthesis; S-adenosylmethioninamine biosynthesis; S-adenosylmethioninamine from S-adenosyl-L-methionine: step 1/1.</text>
</comment>
<comment type="subunit">
    <text evidence="1">Heterooctamer of four alpha and four beta chains arranged as a tetramer of alpha/beta heterodimers.</text>
</comment>
<comment type="PTM">
    <text evidence="1">Is synthesized initially as an inactive proenzyme. Formation of the active enzyme involves a self-maturation process in which the active site pyruvoyl group is generated from an internal serine residue via an autocatalytic post-translational modification. Two non-identical subunits are generated from the proenzyme in this reaction, and the pyruvate is formed at the N-terminus of the alpha chain, which is derived from the carboxyl end of the proenzyme. The post-translation cleavage follows an unusual pathway, termed non-hydrolytic serinolysis, in which the side chain hydroxyl group of the serine supplies its oxygen atom to form the C-terminus of the beta chain, while the remainder of the serine residue undergoes an oxidative deamination to produce ammonia and the pyruvoyl group blocking the N-terminus of the alpha chain.</text>
</comment>
<comment type="similarity">
    <text evidence="1">Belongs to the prokaryotic AdoMetDC family. Type 2 subfamily.</text>
</comment>
<organism>
    <name type="scientific">Salmonella heidelberg (strain SL476)</name>
    <dbReference type="NCBI Taxonomy" id="454169"/>
    <lineage>
        <taxon>Bacteria</taxon>
        <taxon>Pseudomonadati</taxon>
        <taxon>Pseudomonadota</taxon>
        <taxon>Gammaproteobacteria</taxon>
        <taxon>Enterobacterales</taxon>
        <taxon>Enterobacteriaceae</taxon>
        <taxon>Salmonella</taxon>
    </lineage>
</organism>
<feature type="chain" id="PRO_0000364405" description="S-adenosylmethionine decarboxylase beta chain" evidence="1">
    <location>
        <begin position="1"/>
        <end position="111"/>
    </location>
</feature>
<feature type="chain" id="PRO_0000364406" description="S-adenosylmethionine decarboxylase alpha chain" evidence="1">
    <location>
        <begin position="112"/>
        <end position="264"/>
    </location>
</feature>
<feature type="active site" description="Schiff-base intermediate with substrate; via pyruvic acid" evidence="1">
    <location>
        <position position="112"/>
    </location>
</feature>
<feature type="active site" description="Proton acceptor; for processing activity" evidence="1">
    <location>
        <position position="117"/>
    </location>
</feature>
<feature type="active site" description="Proton donor; for catalytic activity" evidence="1">
    <location>
        <position position="140"/>
    </location>
</feature>
<feature type="site" description="Cleavage (non-hydrolytic); by autolysis" evidence="1">
    <location>
        <begin position="111"/>
        <end position="112"/>
    </location>
</feature>
<feature type="modified residue" description="Pyruvic acid (Ser); by autocatalysis" evidence="1">
    <location>
        <position position="112"/>
    </location>
</feature>
<gene>
    <name evidence="1" type="primary">speD</name>
    <name type="ordered locus">SeHA_C0189</name>
</gene>